<name>EFTS_VIBC1</name>
<sequence length="281" mass="29889">MATVTAALVKELRERTGAGMMECKKALVEANADIELAIENMRKSGAAKAAKKAGNVAAEGAIIIKEENGVAVLLEVNCQTDFVAKDGNFTAFADKVALDALATKATAEELVAKFEEERVALVAKIGENINIRRVAYVEGTAIASYRHGEKIGVVVAGEGDAETLKHVAMHVAASKPEFVNPEDVPADVVAKEKEVQVEIAMNEGKPQEIAEKMVIGRMKKFTGEISLTGQAFIMEPKKSVGEMLKEKGASVATFVRLEVGEGIEKAAEMSFAEEVALAQKG</sequence>
<evidence type="ECO:0000255" key="1">
    <source>
        <dbReference type="HAMAP-Rule" id="MF_00050"/>
    </source>
</evidence>
<proteinExistence type="inferred from homology"/>
<dbReference type="EMBL" id="CP000789">
    <property type="protein sequence ID" value="ABU72185.1"/>
    <property type="molecule type" value="Genomic_DNA"/>
</dbReference>
<dbReference type="RefSeq" id="WP_005436775.1">
    <property type="nucleotide sequence ID" value="NC_022269.1"/>
</dbReference>
<dbReference type="SMR" id="A7N1X6"/>
<dbReference type="GeneID" id="67376523"/>
<dbReference type="KEGG" id="vha:VIBHAR_03236"/>
<dbReference type="PATRIC" id="fig|338187.25.peg.2954"/>
<dbReference type="Proteomes" id="UP000008152">
    <property type="component" value="Chromosome I"/>
</dbReference>
<dbReference type="GO" id="GO:0005737">
    <property type="term" value="C:cytoplasm"/>
    <property type="evidence" value="ECO:0007669"/>
    <property type="project" value="UniProtKB-SubCell"/>
</dbReference>
<dbReference type="GO" id="GO:0003746">
    <property type="term" value="F:translation elongation factor activity"/>
    <property type="evidence" value="ECO:0007669"/>
    <property type="project" value="UniProtKB-UniRule"/>
</dbReference>
<dbReference type="CDD" id="cd14275">
    <property type="entry name" value="UBA_EF-Ts"/>
    <property type="match status" value="1"/>
</dbReference>
<dbReference type="FunFam" id="1.10.286.20:FF:000001">
    <property type="entry name" value="Elongation factor Ts"/>
    <property type="match status" value="1"/>
</dbReference>
<dbReference type="FunFam" id="1.10.8.10:FF:000001">
    <property type="entry name" value="Elongation factor Ts"/>
    <property type="match status" value="1"/>
</dbReference>
<dbReference type="FunFam" id="3.30.479.20:FF:000001">
    <property type="entry name" value="Elongation factor Ts"/>
    <property type="match status" value="1"/>
</dbReference>
<dbReference type="Gene3D" id="1.10.286.20">
    <property type="match status" value="1"/>
</dbReference>
<dbReference type="Gene3D" id="1.10.8.10">
    <property type="entry name" value="DNA helicase RuvA subunit, C-terminal domain"/>
    <property type="match status" value="1"/>
</dbReference>
<dbReference type="Gene3D" id="3.30.479.20">
    <property type="entry name" value="Elongation factor Ts, dimerisation domain"/>
    <property type="match status" value="2"/>
</dbReference>
<dbReference type="HAMAP" id="MF_00050">
    <property type="entry name" value="EF_Ts"/>
    <property type="match status" value="1"/>
</dbReference>
<dbReference type="InterPro" id="IPR036402">
    <property type="entry name" value="EF-Ts_dimer_sf"/>
</dbReference>
<dbReference type="InterPro" id="IPR001816">
    <property type="entry name" value="Transl_elong_EFTs/EF1B"/>
</dbReference>
<dbReference type="InterPro" id="IPR014039">
    <property type="entry name" value="Transl_elong_EFTs/EF1B_dimer"/>
</dbReference>
<dbReference type="InterPro" id="IPR018101">
    <property type="entry name" value="Transl_elong_Ts_CS"/>
</dbReference>
<dbReference type="InterPro" id="IPR009060">
    <property type="entry name" value="UBA-like_sf"/>
</dbReference>
<dbReference type="NCBIfam" id="TIGR00116">
    <property type="entry name" value="tsf"/>
    <property type="match status" value="1"/>
</dbReference>
<dbReference type="PANTHER" id="PTHR11741">
    <property type="entry name" value="ELONGATION FACTOR TS"/>
    <property type="match status" value="1"/>
</dbReference>
<dbReference type="PANTHER" id="PTHR11741:SF0">
    <property type="entry name" value="ELONGATION FACTOR TS, MITOCHONDRIAL"/>
    <property type="match status" value="1"/>
</dbReference>
<dbReference type="Pfam" id="PF00889">
    <property type="entry name" value="EF_TS"/>
    <property type="match status" value="1"/>
</dbReference>
<dbReference type="SUPFAM" id="SSF54713">
    <property type="entry name" value="Elongation factor Ts (EF-Ts), dimerisation domain"/>
    <property type="match status" value="2"/>
</dbReference>
<dbReference type="SUPFAM" id="SSF46934">
    <property type="entry name" value="UBA-like"/>
    <property type="match status" value="1"/>
</dbReference>
<dbReference type="PROSITE" id="PS01126">
    <property type="entry name" value="EF_TS_1"/>
    <property type="match status" value="1"/>
</dbReference>
<dbReference type="PROSITE" id="PS01127">
    <property type="entry name" value="EF_TS_2"/>
    <property type="match status" value="1"/>
</dbReference>
<feature type="chain" id="PRO_1000006204" description="Elongation factor Ts">
    <location>
        <begin position="1"/>
        <end position="281"/>
    </location>
</feature>
<feature type="region of interest" description="Involved in Mg(2+) ion dislocation from EF-Tu" evidence="1">
    <location>
        <begin position="80"/>
        <end position="83"/>
    </location>
</feature>
<gene>
    <name evidence="1" type="primary">tsf</name>
    <name type="ordered locus">VIBHAR_03236</name>
</gene>
<organism>
    <name type="scientific">Vibrio campbellii (strain ATCC BAA-1116)</name>
    <dbReference type="NCBI Taxonomy" id="2902295"/>
    <lineage>
        <taxon>Bacteria</taxon>
        <taxon>Pseudomonadati</taxon>
        <taxon>Pseudomonadota</taxon>
        <taxon>Gammaproteobacteria</taxon>
        <taxon>Vibrionales</taxon>
        <taxon>Vibrionaceae</taxon>
        <taxon>Vibrio</taxon>
    </lineage>
</organism>
<reference key="1">
    <citation type="submission" date="2007-08" db="EMBL/GenBank/DDBJ databases">
        <authorList>
            <consortium name="The Vibrio harveyi Genome Sequencing Project"/>
            <person name="Bassler B."/>
            <person name="Clifton S.W."/>
            <person name="Fulton L."/>
            <person name="Delehaunty K."/>
            <person name="Fronick C."/>
            <person name="Harrison M."/>
            <person name="Markivic C."/>
            <person name="Fulton R."/>
            <person name="Tin-Wollam A.-M."/>
            <person name="Shah N."/>
            <person name="Pepin K."/>
            <person name="Nash W."/>
            <person name="Thiruvilangam P."/>
            <person name="Bhonagiri V."/>
            <person name="Waters C."/>
            <person name="Tu K.C."/>
            <person name="Irgon J."/>
            <person name="Wilson R.K."/>
        </authorList>
    </citation>
    <scope>NUCLEOTIDE SEQUENCE [LARGE SCALE GENOMIC DNA]</scope>
    <source>
        <strain>ATCC BAA-1116 / BB120</strain>
    </source>
</reference>
<protein>
    <recommendedName>
        <fullName evidence="1">Elongation factor Ts</fullName>
        <shortName evidence="1">EF-Ts</shortName>
    </recommendedName>
</protein>
<accession>A7N1X6</accession>
<comment type="function">
    <text evidence="1">Associates with the EF-Tu.GDP complex and induces the exchange of GDP to GTP. It remains bound to the aminoacyl-tRNA.EF-Tu.GTP complex up to the GTP hydrolysis stage on the ribosome.</text>
</comment>
<comment type="subcellular location">
    <subcellularLocation>
        <location evidence="1">Cytoplasm</location>
    </subcellularLocation>
</comment>
<comment type="similarity">
    <text evidence="1">Belongs to the EF-Ts family.</text>
</comment>
<keyword id="KW-0963">Cytoplasm</keyword>
<keyword id="KW-0251">Elongation factor</keyword>
<keyword id="KW-0648">Protein biosynthesis</keyword>